<keyword id="KW-0027">Amidation</keyword>
<keyword id="KW-0903">Direct protein sequencing</keyword>
<keyword id="KW-1015">Disulfide bond</keyword>
<keyword id="KW-0872">Ion channel impairing toxin</keyword>
<keyword id="KW-0528">Neurotoxin</keyword>
<keyword id="KW-0964">Secreted</keyword>
<keyword id="KW-0732">Signal</keyword>
<keyword id="KW-0800">Toxin</keyword>
<keyword id="KW-0738">Voltage-gated sodium channel impairing toxin</keyword>
<evidence type="ECO:0000250" key="1">
    <source>
        <dbReference type="UniProtKB" id="P56637"/>
    </source>
</evidence>
<evidence type="ECO:0000255" key="2">
    <source>
        <dbReference type="PROSITE-ProRule" id="PRU01210"/>
    </source>
</evidence>
<evidence type="ECO:0000269" key="3">
    <source>
    </source>
</evidence>
<evidence type="ECO:0000303" key="4">
    <source>
    </source>
</evidence>
<evidence type="ECO:0000305" key="5"/>
<evidence type="ECO:0000305" key="6">
    <source>
    </source>
</evidence>
<comment type="function">
    <text>Depressant insect beta-toxins cause a transient contraction paralysis followed by a slow flaccid paralysis. They bind voltage-independently at site-4 of sodium channels (Nav) and shift the voltage of activation toward more negative potentials thereby affecting sodium channel activation and promoting spontaneous and repetitive firing. However, this toxin has some characteristics of excitatory toxins such as bursts of activity after the membrane has been hyperpolarized. This toxin is active only on insects.</text>
</comment>
<comment type="subcellular location">
    <subcellularLocation>
        <location evidence="3">Secreted</location>
    </subcellularLocation>
</comment>
<comment type="tissue specificity">
    <text evidence="6">Expressed by the venom gland.</text>
</comment>
<comment type="domain">
    <text evidence="5">Has the structural arrangement of an alpha-helix connected to antiparallel beta-sheets by disulfide bonds (CS-alpha/beta).</text>
</comment>
<comment type="mass spectrometry" mass="6763.9" method="Electrospray" evidence="3"/>
<comment type="similarity">
    <text evidence="5">Belongs to the long (4 C-C) scorpion toxin superfamily. Sodium channel inhibitor family. Beta subfamily.</text>
</comment>
<reference key="1">
    <citation type="journal article" date="2003" name="J. Pept. Res.">
        <title>Purification of two depressant insect neurotoxins and their gene cloning from the scorpion Buthus martensi Karsch.</title>
        <authorList>
            <person name="Wang C.-G."/>
            <person name="Ling M.-H."/>
            <person name="Chi C.-W."/>
            <person name="Wang D.-C."/>
            <person name="Pelhate M."/>
        </authorList>
    </citation>
    <scope>NUCLEOTIDE SEQUENCE [GENOMIC DNA]</scope>
    <scope>PROTEIN SEQUENCE OF 22-56</scope>
    <scope>AMIDATION AT GLY-82</scope>
    <scope>ELECTROPHYSIOLOGICAL CHARACTERIZATION</scope>
    <scope>MASS SPECTROMETRY</scope>
    <scope>SUBCELLULAR LOCATION</scope>
    <source>
        <tissue>Venom</tissue>
        <tissue>Venom gland</tissue>
    </source>
</reference>
<proteinExistence type="evidence at protein level"/>
<name>SIXB_OLIMR</name>
<feature type="signal peptide" evidence="3">
    <location>
        <begin position="1"/>
        <end position="21"/>
    </location>
</feature>
<feature type="chain" id="PRO_0000035206" description="Beta-insect depressant toxin BmKITb" evidence="6">
    <location>
        <begin position="22"/>
        <end position="82"/>
    </location>
</feature>
<feature type="domain" description="LCN-type CS-alpha/beta" evidence="2">
    <location>
        <begin position="22"/>
        <end position="82"/>
    </location>
</feature>
<feature type="modified residue" description="Glycine amide" evidence="3">
    <location>
        <position position="82"/>
    </location>
</feature>
<feature type="disulfide bond" evidence="2">
    <location>
        <begin position="31"/>
        <end position="81"/>
    </location>
</feature>
<feature type="disulfide bond" evidence="1 2">
    <location>
        <begin position="35"/>
        <end position="56"/>
    </location>
</feature>
<feature type="disulfide bond" evidence="1 2">
    <location>
        <begin position="42"/>
        <end position="63"/>
    </location>
</feature>
<feature type="disulfide bond" evidence="1 2">
    <location>
        <begin position="46"/>
        <end position="65"/>
    </location>
</feature>
<feature type="sequence conflict" description="In Ref. 1; fig.5." evidence="5" ref="1">
    <original>V</original>
    <variation>I</variation>
    <location>
        <position position="33"/>
    </location>
</feature>
<feature type="sequence conflict" description="In Ref. 1; fig.5." evidence="5" ref="1">
    <original>A</original>
    <variation>G</variation>
    <location>
        <position position="48"/>
    </location>
</feature>
<organism>
    <name type="scientific">Olivierus martensii</name>
    <name type="common">Manchurian scorpion</name>
    <name type="synonym">Mesobuthus martensii</name>
    <dbReference type="NCBI Taxonomy" id="34649"/>
    <lineage>
        <taxon>Eukaryota</taxon>
        <taxon>Metazoa</taxon>
        <taxon>Ecdysozoa</taxon>
        <taxon>Arthropoda</taxon>
        <taxon>Chelicerata</taxon>
        <taxon>Arachnida</taxon>
        <taxon>Scorpiones</taxon>
        <taxon>Buthida</taxon>
        <taxon>Buthoidea</taxon>
        <taxon>Buthidae</taxon>
        <taxon>Olivierus</taxon>
    </lineage>
</organism>
<accession>Q95WX6</accession>
<sequence length="85" mass="9330">MKLFLLLVISASMLIDGLVNADGYIRGSNGCKVSCLWGNEGCNKECKAFGAYYGYCWTWGLACWCQGLPDDKTWKSESNTCGGKK</sequence>
<dbReference type="EMBL" id="AF272777">
    <property type="protein sequence ID" value="AAF77063.2"/>
    <property type="molecule type" value="Genomic_DNA"/>
</dbReference>
<dbReference type="SMR" id="Q95WX6"/>
<dbReference type="GO" id="GO:0005576">
    <property type="term" value="C:extracellular region"/>
    <property type="evidence" value="ECO:0007669"/>
    <property type="project" value="UniProtKB-SubCell"/>
</dbReference>
<dbReference type="GO" id="GO:0019871">
    <property type="term" value="F:sodium channel inhibitor activity"/>
    <property type="evidence" value="ECO:0007669"/>
    <property type="project" value="InterPro"/>
</dbReference>
<dbReference type="GO" id="GO:0090729">
    <property type="term" value="F:toxin activity"/>
    <property type="evidence" value="ECO:0007669"/>
    <property type="project" value="UniProtKB-KW"/>
</dbReference>
<dbReference type="GO" id="GO:0006952">
    <property type="term" value="P:defense response"/>
    <property type="evidence" value="ECO:0007669"/>
    <property type="project" value="InterPro"/>
</dbReference>
<dbReference type="CDD" id="cd23106">
    <property type="entry name" value="neurotoxins_LC_scorpion"/>
    <property type="match status" value="1"/>
</dbReference>
<dbReference type="FunFam" id="3.30.30.10:FF:000002">
    <property type="entry name" value="Alpha-like toxin BmK-M1"/>
    <property type="match status" value="1"/>
</dbReference>
<dbReference type="Gene3D" id="3.30.30.10">
    <property type="entry name" value="Knottin, scorpion toxin-like"/>
    <property type="match status" value="1"/>
</dbReference>
<dbReference type="InterPro" id="IPR044062">
    <property type="entry name" value="LCN-type_CS_alpha_beta_dom"/>
</dbReference>
<dbReference type="InterPro" id="IPR003614">
    <property type="entry name" value="Scorpion_toxin-like"/>
</dbReference>
<dbReference type="InterPro" id="IPR036574">
    <property type="entry name" value="Scorpion_toxin-like_sf"/>
</dbReference>
<dbReference type="InterPro" id="IPR018218">
    <property type="entry name" value="Scorpion_toxinL"/>
</dbReference>
<dbReference type="InterPro" id="IPR002061">
    <property type="entry name" value="Scorpion_toxinL/defensin"/>
</dbReference>
<dbReference type="Pfam" id="PF00537">
    <property type="entry name" value="Toxin_3"/>
    <property type="match status" value="1"/>
</dbReference>
<dbReference type="PRINTS" id="PR00285">
    <property type="entry name" value="SCORPNTOXIN"/>
</dbReference>
<dbReference type="SMART" id="SM00505">
    <property type="entry name" value="Knot1"/>
    <property type="match status" value="1"/>
</dbReference>
<dbReference type="SUPFAM" id="SSF57095">
    <property type="entry name" value="Scorpion toxin-like"/>
    <property type="match status" value="1"/>
</dbReference>
<dbReference type="PROSITE" id="PS51863">
    <property type="entry name" value="LCN_CSAB"/>
    <property type="match status" value="1"/>
</dbReference>
<protein>
    <recommendedName>
        <fullName evidence="4">Beta-insect depressant toxin BmKITb</fullName>
        <shortName evidence="4">BmK ITb</shortName>
    </recommendedName>
</protein>